<organism>
    <name type="scientific">Pyrobaculum islandicum (strain DSM 4184 / JCM 9189 / GEO3)</name>
    <dbReference type="NCBI Taxonomy" id="384616"/>
    <lineage>
        <taxon>Archaea</taxon>
        <taxon>Thermoproteota</taxon>
        <taxon>Thermoprotei</taxon>
        <taxon>Thermoproteales</taxon>
        <taxon>Thermoproteaceae</taxon>
        <taxon>Pyrobaculum</taxon>
    </lineage>
</organism>
<evidence type="ECO:0000255" key="1">
    <source>
        <dbReference type="HAMAP-Rule" id="MF_00511"/>
    </source>
</evidence>
<evidence type="ECO:0000305" key="2"/>
<accession>A1RTI5</accession>
<sequence>MGRVKPKYIKSLARRLLETYPDKFTDSFEENKKAVAQLADIPSKTVRNKVAGYITRLVKRLKTQEKTESAA</sequence>
<comment type="similarity">
    <text evidence="1">Belongs to the eukaryotic ribosomal protein eS17 family.</text>
</comment>
<protein>
    <recommendedName>
        <fullName evidence="1">Small ribosomal subunit protein eS17</fullName>
    </recommendedName>
    <alternativeName>
        <fullName evidence="2">30S ribosomal protein S17e</fullName>
    </alternativeName>
</protein>
<feature type="chain" id="PRO_1000050631" description="Small ribosomal subunit protein eS17">
    <location>
        <begin position="1"/>
        <end position="71"/>
    </location>
</feature>
<keyword id="KW-0687">Ribonucleoprotein</keyword>
<keyword id="KW-0689">Ribosomal protein</keyword>
<name>RS17E_PYRIL</name>
<reference key="1">
    <citation type="submission" date="2006-12" db="EMBL/GenBank/DDBJ databases">
        <title>Complete sequence of Pyrobaculum islandicum DSM 4184.</title>
        <authorList>
            <person name="Copeland A."/>
            <person name="Lucas S."/>
            <person name="Lapidus A."/>
            <person name="Barry K."/>
            <person name="Detter J.C."/>
            <person name="Glavina del Rio T."/>
            <person name="Dalin E."/>
            <person name="Tice H."/>
            <person name="Pitluck S."/>
            <person name="Meincke L."/>
            <person name="Brettin T."/>
            <person name="Bruce D."/>
            <person name="Han C."/>
            <person name="Tapia R."/>
            <person name="Gilna P."/>
            <person name="Schmutz J."/>
            <person name="Larimer F."/>
            <person name="Land M."/>
            <person name="Hauser L."/>
            <person name="Kyrpides N."/>
            <person name="Mikhailova N."/>
            <person name="Cozen A.E."/>
            <person name="Fitz-Gibbon S.T."/>
            <person name="House C.H."/>
            <person name="Saltikov C."/>
            <person name="Lowe T."/>
            <person name="Richardson P."/>
        </authorList>
    </citation>
    <scope>NUCLEOTIDE SEQUENCE [LARGE SCALE GENOMIC DNA]</scope>
    <source>
        <strain>DSM 4184 / JCM 9189 / GEO3</strain>
    </source>
</reference>
<proteinExistence type="inferred from homology"/>
<gene>
    <name evidence="1" type="primary">rps17e</name>
    <name type="ordered locus">Pisl_1095</name>
</gene>
<dbReference type="EMBL" id="CP000504">
    <property type="protein sequence ID" value="ABL88267.1"/>
    <property type="molecule type" value="Genomic_DNA"/>
</dbReference>
<dbReference type="RefSeq" id="WP_011762842.1">
    <property type="nucleotide sequence ID" value="NC_008701.1"/>
</dbReference>
<dbReference type="SMR" id="A1RTI5"/>
<dbReference type="STRING" id="384616.Pisl_1095"/>
<dbReference type="GeneID" id="4617195"/>
<dbReference type="KEGG" id="pis:Pisl_1095"/>
<dbReference type="eggNOG" id="arCOG01885">
    <property type="taxonomic scope" value="Archaea"/>
</dbReference>
<dbReference type="HOGENOM" id="CLU_176720_2_0_2"/>
<dbReference type="OrthoDB" id="52479at2157"/>
<dbReference type="Proteomes" id="UP000002595">
    <property type="component" value="Chromosome"/>
</dbReference>
<dbReference type="GO" id="GO:0005829">
    <property type="term" value="C:cytosol"/>
    <property type="evidence" value="ECO:0007669"/>
    <property type="project" value="UniProtKB-ARBA"/>
</dbReference>
<dbReference type="GO" id="GO:1990904">
    <property type="term" value="C:ribonucleoprotein complex"/>
    <property type="evidence" value="ECO:0007669"/>
    <property type="project" value="UniProtKB-KW"/>
</dbReference>
<dbReference type="GO" id="GO:0005840">
    <property type="term" value="C:ribosome"/>
    <property type="evidence" value="ECO:0007669"/>
    <property type="project" value="UniProtKB-KW"/>
</dbReference>
<dbReference type="GO" id="GO:0003735">
    <property type="term" value="F:structural constituent of ribosome"/>
    <property type="evidence" value="ECO:0007669"/>
    <property type="project" value="InterPro"/>
</dbReference>
<dbReference type="GO" id="GO:0006412">
    <property type="term" value="P:translation"/>
    <property type="evidence" value="ECO:0007669"/>
    <property type="project" value="UniProtKB-UniRule"/>
</dbReference>
<dbReference type="Gene3D" id="1.10.60.20">
    <property type="entry name" value="Ribosomal protein S17e-like"/>
    <property type="match status" value="1"/>
</dbReference>
<dbReference type="HAMAP" id="MF_00511">
    <property type="entry name" value="Ribosomal_eS17"/>
    <property type="match status" value="1"/>
</dbReference>
<dbReference type="InterPro" id="IPR001210">
    <property type="entry name" value="Ribosomal_eS17"/>
</dbReference>
<dbReference type="InterPro" id="IPR018273">
    <property type="entry name" value="Ribosomal_eS17_CS"/>
</dbReference>
<dbReference type="InterPro" id="IPR036401">
    <property type="entry name" value="Ribosomal_eS17_sf"/>
</dbReference>
<dbReference type="NCBIfam" id="NF002242">
    <property type="entry name" value="PRK01151.1"/>
    <property type="match status" value="1"/>
</dbReference>
<dbReference type="PANTHER" id="PTHR10732">
    <property type="entry name" value="40S RIBOSOMAL PROTEIN S17"/>
    <property type="match status" value="1"/>
</dbReference>
<dbReference type="PANTHER" id="PTHR10732:SF0">
    <property type="entry name" value="40S RIBOSOMAL PROTEIN S17"/>
    <property type="match status" value="1"/>
</dbReference>
<dbReference type="Pfam" id="PF00833">
    <property type="entry name" value="Ribosomal_S17e"/>
    <property type="match status" value="1"/>
</dbReference>
<dbReference type="SUPFAM" id="SSF116820">
    <property type="entry name" value="Rps17e-like"/>
    <property type="match status" value="1"/>
</dbReference>
<dbReference type="PROSITE" id="PS00712">
    <property type="entry name" value="RIBOSOMAL_S17E"/>
    <property type="match status" value="1"/>
</dbReference>